<accession>P9WKY8</accession>
<accession>L0TCP4</accession>
<accession>P65079</accession>
<accession>Q50714</accession>
<evidence type="ECO:0000256" key="1">
    <source>
        <dbReference type="SAM" id="MobiDB-lite"/>
    </source>
</evidence>
<evidence type="ECO:0000305" key="2"/>
<sequence length="136" mass="15302">MRDHLPPGLPPDPFADDPCDPSAALEAVEPGQPLDQQERMAVEADLADLAVYEALLAHKGIRGLVVCCDECQQDHYHDWDMLRSNLLQLLIDGTVRPHEPAYDPEPDSYVTWDYCRGYADASLNEAAPDADRFRRR</sequence>
<feature type="chain" id="PRO_0000427571" description="Uncharacterized protein MT3521">
    <location>
        <begin position="1"/>
        <end position="136"/>
    </location>
</feature>
<feature type="region of interest" description="Disordered" evidence="1">
    <location>
        <begin position="1"/>
        <end position="33"/>
    </location>
</feature>
<name>Y3412_MYCTO</name>
<dbReference type="EMBL" id="AE000516">
    <property type="protein sequence ID" value="AAK47859.1"/>
    <property type="molecule type" value="Genomic_DNA"/>
</dbReference>
<dbReference type="PIR" id="A70737">
    <property type="entry name" value="A70737"/>
</dbReference>
<dbReference type="RefSeq" id="WP_003418008.1">
    <property type="nucleotide sequence ID" value="NZ_KK341227.1"/>
</dbReference>
<dbReference type="SMR" id="P9WKY8"/>
<dbReference type="KEGG" id="mtc:MT3521"/>
<dbReference type="PATRIC" id="fig|83331.31.peg.3778"/>
<dbReference type="HOGENOM" id="CLU_122324_1_0_11"/>
<dbReference type="Proteomes" id="UP000001020">
    <property type="component" value="Chromosome"/>
</dbReference>
<dbReference type="InterPro" id="IPR035165">
    <property type="entry name" value="DUF5319"/>
</dbReference>
<dbReference type="Pfam" id="PF17252">
    <property type="entry name" value="DUF5319"/>
    <property type="match status" value="1"/>
</dbReference>
<protein>
    <recommendedName>
        <fullName>Uncharacterized protein MT3521</fullName>
    </recommendedName>
</protein>
<keyword id="KW-1185">Reference proteome</keyword>
<comment type="similarity">
    <text evidence="2">To M.leprae ML0386.</text>
</comment>
<reference key="1">
    <citation type="journal article" date="2002" name="J. Bacteriol.">
        <title>Whole-genome comparison of Mycobacterium tuberculosis clinical and laboratory strains.</title>
        <authorList>
            <person name="Fleischmann R.D."/>
            <person name="Alland D."/>
            <person name="Eisen J.A."/>
            <person name="Carpenter L."/>
            <person name="White O."/>
            <person name="Peterson J.D."/>
            <person name="DeBoy R.T."/>
            <person name="Dodson R.J."/>
            <person name="Gwinn M.L."/>
            <person name="Haft D.H."/>
            <person name="Hickey E.K."/>
            <person name="Kolonay J.F."/>
            <person name="Nelson W.C."/>
            <person name="Umayam L.A."/>
            <person name="Ermolaeva M.D."/>
            <person name="Salzberg S.L."/>
            <person name="Delcher A."/>
            <person name="Utterback T.R."/>
            <person name="Weidman J.F."/>
            <person name="Khouri H.M."/>
            <person name="Gill J."/>
            <person name="Mikula A."/>
            <person name="Bishai W."/>
            <person name="Jacobs W.R. Jr."/>
            <person name="Venter J.C."/>
            <person name="Fraser C.M."/>
        </authorList>
    </citation>
    <scope>NUCLEOTIDE SEQUENCE [LARGE SCALE GENOMIC DNA]</scope>
    <source>
        <strain>CDC 1551 / Oshkosh</strain>
    </source>
</reference>
<organism>
    <name type="scientific">Mycobacterium tuberculosis (strain CDC 1551 / Oshkosh)</name>
    <dbReference type="NCBI Taxonomy" id="83331"/>
    <lineage>
        <taxon>Bacteria</taxon>
        <taxon>Bacillati</taxon>
        <taxon>Actinomycetota</taxon>
        <taxon>Actinomycetes</taxon>
        <taxon>Mycobacteriales</taxon>
        <taxon>Mycobacteriaceae</taxon>
        <taxon>Mycobacterium</taxon>
        <taxon>Mycobacterium tuberculosis complex</taxon>
    </lineage>
</organism>
<gene>
    <name type="ordered locus">MT3521</name>
</gene>
<proteinExistence type="predicted"/>